<organism>
    <name type="scientific">Acremonium sp</name>
    <dbReference type="NCBI Taxonomy" id="2046025"/>
    <lineage>
        <taxon>Eukaryota</taxon>
        <taxon>Fungi</taxon>
        <taxon>Dikarya</taxon>
        <taxon>Ascomycota</taxon>
        <taxon>Pezizomycotina</taxon>
        <taxon>Sordariomycetes</taxon>
        <taxon>Hypocreomycetidae</taxon>
        <taxon>Hypocreales</taxon>
        <taxon>Hypocreales incertae sedis</taxon>
        <taxon>Acremonium</taxon>
    </lineage>
</organism>
<keyword id="KW-0325">Glycoprotein</keyword>
<keyword id="KW-0413">Isomerase</keyword>
<keyword id="KW-0732">Signal</keyword>
<keyword id="KW-0843">Virulence</keyword>
<accession>A0A8F4S9U3</accession>
<sequence>MMHQSLGLGLVVFVAAPVVAFQTQYPLSPPFPERLHEEWDESCSISKSTAFETFKGPNNFSTSPSEHIHSVKITPSINATNWEQWEFDGLSHTGLSGLLMAFSRDASYAFFGQGNLRVEFYITLGDGTVIQELDYISESYVADCPGFTAGVWNSSDRSYSFHVTKDHQFARLKFDSWRVRGGFTMSSSTKPHLADGSPWTADGGKADATEISPGLHYGLSMGGADVNVDATLSSGRRIAFKGRGGSTRLWATDGWLKLCEGWKVFRAWAGPYSIVYWDVMGRMGRPGKYVSGHLFYNDELLVGSRVGNVSAEEDYVLFTDNYDGEMSGRYKDKNTGHTFEFASPSKDKKWKFDMQHVVTQYEMGAGAGFGMSGFANRVVGGEVGGVQYEGKGHSEQTYWPEYIEEWKIWLVWGFGFLGKGKTYVMKMVSYVL</sequence>
<name>PYDB_ACRSP</name>
<protein>
    <recommendedName>
        <fullName evidence="4">Hexane cyclase pydB</fullName>
        <ecNumber evidence="3">5.5.1.-</ecNumber>
    </recommendedName>
    <alternativeName>
        <fullName evidence="4">Pyrrocidines biosynthesis cluster protein B</fullName>
    </alternativeName>
</protein>
<proteinExistence type="evidence at protein level"/>
<dbReference type="EC" id="5.5.1.-" evidence="3"/>
<dbReference type="EMBL" id="MW690134">
    <property type="protein sequence ID" value="QXF14601.1"/>
    <property type="molecule type" value="Genomic_DNA"/>
</dbReference>
<dbReference type="SMR" id="A0A8F4S9U3"/>
<dbReference type="GO" id="GO:0016853">
    <property type="term" value="F:isomerase activity"/>
    <property type="evidence" value="ECO:0007669"/>
    <property type="project" value="UniProtKB-KW"/>
</dbReference>
<dbReference type="InterPro" id="IPR054499">
    <property type="entry name" value="DA_C"/>
</dbReference>
<dbReference type="Pfam" id="PF22903">
    <property type="entry name" value="DA_C"/>
    <property type="match status" value="1"/>
</dbReference>
<dbReference type="Pfam" id="PF24137">
    <property type="entry name" value="DA_N"/>
    <property type="match status" value="1"/>
</dbReference>
<feature type="signal peptide" evidence="1">
    <location>
        <begin position="1"/>
        <end position="20"/>
    </location>
</feature>
<feature type="chain" id="PRO_5034775386" description="Hexane cyclase pydB">
    <location>
        <begin position="21"/>
        <end position="432"/>
    </location>
</feature>
<feature type="glycosylation site" description="N-linked (GlcNAc...) asparagine" evidence="2">
    <location>
        <position position="59"/>
    </location>
</feature>
<feature type="glycosylation site" description="N-linked (GlcNAc...) asparagine" evidence="2">
    <location>
        <position position="78"/>
    </location>
</feature>
<feature type="glycosylation site" description="N-linked (GlcNAc...) asparagine" evidence="2">
    <location>
        <position position="153"/>
    </location>
</feature>
<feature type="glycosylation site" description="N-linked (GlcNAc...) asparagine" evidence="2">
    <location>
        <position position="308"/>
    </location>
</feature>
<comment type="function">
    <text evidence="3 6">Hexane cyclase; part of the gene cluster that mediates the biosynthesis of pyrrocidines, fungal natural products containing a macrocyclic para-cyclophane connected to a decahydrofluorene ring system that show potent antibiotic activities toward Gram-negative bacteria (PubMed:33834778). Within the pathway, pydB functions synergistically with pydE, pydX and pydZ to form the cyclophane (PubMed:33834778). The pathway begins with the PKS-NRPS pydA which, with the help of the trans-enoyl reductase pydC, synthesizes the polyketide-tyrosyl acyl thioester product which can be reductively off-loaded by the terminal reductase (R) domain in pydA. The alpha/beta hydrolase pydG is then required to catalyze the subsequent Knoevenagel condensation that affords the 3-pyrrolin-2-one ring, whereas the four proteins pydB, pydE, pydX and pydZ then function synergistically to form the cyclophane. PydB and the membrane-bound pydX and pydZ are lipid-binding proteins that can sequester and mold the pdyG product into the inverse S-shape. Binding of the medium chain reductase pydE to the complex would trigger the cascade oxidative cyclization. PydY is involved the Diels-Alder cycloaddition that forms the decahydrofluorene core. Additional non-enzymatic hydroxylation yields pyrrocidine A2 which can be further reduced into pyrrocidine B by an endogenous reductase (Probable).</text>
</comment>
<comment type="pathway">
    <text evidence="3">Mycotoxin biosynthesis.</text>
</comment>
<comment type="similarity">
    <text evidence="5">Belongs to the Diels-Alderase family.</text>
</comment>
<evidence type="ECO:0000255" key="1"/>
<evidence type="ECO:0000255" key="2">
    <source>
        <dbReference type="PROSITE-ProRule" id="PRU00498"/>
    </source>
</evidence>
<evidence type="ECO:0000269" key="3">
    <source>
    </source>
</evidence>
<evidence type="ECO:0000303" key="4">
    <source>
    </source>
</evidence>
<evidence type="ECO:0000305" key="5"/>
<evidence type="ECO:0000305" key="6">
    <source>
    </source>
</evidence>
<reference key="1">
    <citation type="journal article" date="2021" name="J. Am. Chem. Soc.">
        <title>Biosynthesis of para-cyclophane-containing hirsutellone family of fungal natural products.</title>
        <authorList>
            <person name="Ohashi M."/>
            <person name="Kakule T.B."/>
            <person name="Tang M.C."/>
            <person name="Jamieson C.S."/>
            <person name="Liu M."/>
            <person name="Zhao Y.L."/>
            <person name="Houk K.N."/>
            <person name="Tang Y."/>
        </authorList>
    </citation>
    <scope>NUCLEOTIDE SEQUENCE [GENOMIC DNA]</scope>
    <scope>FUNCTION</scope>
    <scope>CATALYTIC ACTIVITY</scope>
    <scope>PATHWAY</scope>
</reference>
<gene>
    <name evidence="4" type="primary">pydB</name>
</gene>